<comment type="function">
    <text evidence="2">Phosphorylase is an important allosteric enzyme in carbohydrate metabolism. Catalyzes the phospholytic cleavage of maltodextrins with a minimal chain length of five glucose residues to yield glucose-1-phosphate. Low activity with tetraose and no activity with triose and maltose. Long maltodextrins (8 to 15 glucose units), amylose and starch are not as good substrates as maltoheptaose.</text>
</comment>
<comment type="catalytic activity">
    <reaction evidence="2">
        <text>[(1-&gt;4)-alpha-D-glucosyl](n) + phosphate = [(1-&gt;4)-alpha-D-glucosyl](n-1) + alpha-D-glucose 1-phosphate</text>
        <dbReference type="Rhea" id="RHEA:41732"/>
        <dbReference type="Rhea" id="RHEA-COMP:9584"/>
        <dbReference type="Rhea" id="RHEA-COMP:9586"/>
        <dbReference type="ChEBI" id="CHEBI:15444"/>
        <dbReference type="ChEBI" id="CHEBI:43474"/>
        <dbReference type="ChEBI" id="CHEBI:58601"/>
        <dbReference type="EC" id="2.4.1.1"/>
    </reaction>
</comment>
<comment type="cofactor">
    <cofactor evidence="2">
        <name>pyridoxal 5'-phosphate</name>
        <dbReference type="ChEBI" id="CHEBI:597326"/>
    </cofactor>
</comment>
<comment type="biophysicochemical properties">
    <kinetics>
        <KM evidence="2">0.46 mM for maltoheptaose (at 60 degrees Celsius)</KM>
        <Vmax evidence="2">66.0 umol/min/mg enzyme with maltoheptaose as substrate</Vmax>
    </kinetics>
    <temperatureDependence>
        <text evidence="2">Optimum temperature is 98 degrees Celsius.</text>
    </temperatureDependence>
</comment>
<comment type="subunit">
    <text evidence="2">Trimer (at 25 degrees Celsius).</text>
</comment>
<comment type="induction">
    <text evidence="2">Expressed constitutively.</text>
</comment>
<comment type="similarity">
    <text evidence="3">Belongs to the glycogen phosphorylase family.</text>
</comment>
<reference key="1">
    <citation type="journal article" date="1999" name="J. Bacteriol.">
        <title>Maltose metabolism in the hyperthermophilic archaeon Thermococcus litoralis: purification and characterization of key enzymes.</title>
        <authorList>
            <person name="Xavier K.B."/>
            <person name="Peist R."/>
            <person name="Kossmann M."/>
            <person name="Boos W."/>
            <person name="Santos H."/>
        </authorList>
    </citation>
    <scope>NUCLEOTIDE SEQUENCE [GENOMIC DNA]</scope>
    <scope>PROTEIN SEQUENCE OF 1-19</scope>
    <scope>FUNCTION</scope>
    <scope>CATALYTIC ACTIVITY</scope>
    <scope>BIOPHYSICOCHEMICAL PROPERTIES</scope>
    <scope>COFACTOR</scope>
    <scope>INDUCTION</scope>
    <scope>SUBUNIT</scope>
    <source>
        <strain>ATCC 51850 / DSM 5473 / JCM 8560 / NS-C</strain>
    </source>
</reference>
<reference key="2">
    <citation type="journal article" date="2012" name="J. Bacteriol.">
        <title>Genome sequence of the model hyperthermophilic archaeon Thermococcus litoralis NS-C.</title>
        <authorList>
            <person name="Gardner A.F."/>
            <person name="Kumar S."/>
            <person name="Perler F.B."/>
        </authorList>
    </citation>
    <scope>NUCLEOTIDE SEQUENCE [LARGE SCALE GENOMIC DNA]</scope>
    <source>
        <strain>ATCC 51850 / DSM 5473 / JCM 8560 / NS-C</strain>
    </source>
</reference>
<keyword id="KW-0021">Allosteric enzyme</keyword>
<keyword id="KW-0119">Carbohydrate metabolism</keyword>
<keyword id="KW-0903">Direct protein sequencing</keyword>
<keyword id="KW-0328">Glycosyltransferase</keyword>
<keyword id="KW-0462">Maltose metabolism</keyword>
<keyword id="KW-0663">Pyridoxal phosphate</keyword>
<keyword id="KW-0808">Transferase</keyword>
<gene>
    <name type="primary">malP</name>
    <name type="ORF">OCC_08779</name>
</gene>
<organism>
    <name type="scientific">Thermococcus litoralis (strain ATCC 51850 / DSM 5473 / JCM 8560 / NS-C)</name>
    <dbReference type="NCBI Taxonomy" id="523849"/>
    <lineage>
        <taxon>Archaea</taxon>
        <taxon>Methanobacteriati</taxon>
        <taxon>Methanobacteriota</taxon>
        <taxon>Thermococci</taxon>
        <taxon>Thermococcales</taxon>
        <taxon>Thermococcaceae</taxon>
        <taxon>Thermococcus</taxon>
    </lineage>
</organism>
<protein>
    <recommendedName>
        <fullName>Maltodextrin phosphorylase</fullName>
        <ecNumber>2.4.1.1</ecNumber>
    </recommendedName>
</protein>
<dbReference type="EC" id="2.4.1.1"/>
<dbReference type="EMBL" id="AF115479">
    <property type="protein sequence ID" value="AAD28735.1"/>
    <property type="molecule type" value="Genomic_DNA"/>
</dbReference>
<dbReference type="EMBL" id="CP006670">
    <property type="protein sequence ID" value="EHR79635.1"/>
    <property type="molecule type" value="Genomic_DNA"/>
</dbReference>
<dbReference type="RefSeq" id="WP_004066514.1">
    <property type="nucleotide sequence ID" value="NC_022084.1"/>
</dbReference>
<dbReference type="SMR" id="Q9YGA7"/>
<dbReference type="STRING" id="523849.OCC_08779"/>
<dbReference type="CAZy" id="GT35">
    <property type="family name" value="Glycosyltransferase Family 35"/>
</dbReference>
<dbReference type="PaxDb" id="523849-OCC_08779"/>
<dbReference type="GeneID" id="16550394"/>
<dbReference type="KEGG" id="tlt:OCC_08779"/>
<dbReference type="HOGENOM" id="CLU_015112_0_0_2"/>
<dbReference type="OrthoDB" id="17863at2157"/>
<dbReference type="Proteomes" id="UP000015502">
    <property type="component" value="Chromosome"/>
</dbReference>
<dbReference type="GO" id="GO:0008184">
    <property type="term" value="F:glycogen phosphorylase activity"/>
    <property type="evidence" value="ECO:0007669"/>
    <property type="project" value="InterPro"/>
</dbReference>
<dbReference type="GO" id="GO:0030170">
    <property type="term" value="F:pyridoxal phosphate binding"/>
    <property type="evidence" value="ECO:0007669"/>
    <property type="project" value="InterPro"/>
</dbReference>
<dbReference type="GO" id="GO:0000023">
    <property type="term" value="P:maltose metabolic process"/>
    <property type="evidence" value="ECO:0007669"/>
    <property type="project" value="UniProtKB-KW"/>
</dbReference>
<dbReference type="Gene3D" id="3.40.50.2000">
    <property type="entry name" value="Glycogen Phosphorylase B"/>
    <property type="match status" value="3"/>
</dbReference>
<dbReference type="InterPro" id="IPR011834">
    <property type="entry name" value="Agluc_phsphrylas"/>
</dbReference>
<dbReference type="InterPro" id="IPR000811">
    <property type="entry name" value="Glyco_trans_35"/>
</dbReference>
<dbReference type="InterPro" id="IPR052182">
    <property type="entry name" value="Glycogen/Maltodextrin_Phosph"/>
</dbReference>
<dbReference type="InterPro" id="IPR053611">
    <property type="entry name" value="Glycogen_Phosphorylase"/>
</dbReference>
<dbReference type="InterPro" id="IPR024517">
    <property type="entry name" value="Glycogen_phosphorylase_DUF3417"/>
</dbReference>
<dbReference type="InterPro" id="IPR035090">
    <property type="entry name" value="Pyridoxal_P_attach_site"/>
</dbReference>
<dbReference type="NCBIfam" id="NF041129">
    <property type="entry name" value="maldex_phorlase_Thcocales"/>
    <property type="match status" value="1"/>
</dbReference>
<dbReference type="NCBIfam" id="TIGR02094">
    <property type="entry name" value="more_P_ylases"/>
    <property type="match status" value="1"/>
</dbReference>
<dbReference type="PANTHER" id="PTHR42655">
    <property type="entry name" value="GLYCOGEN PHOSPHORYLASE"/>
    <property type="match status" value="1"/>
</dbReference>
<dbReference type="PANTHER" id="PTHR42655:SF1">
    <property type="entry name" value="GLYCOGEN PHOSPHORYLASE"/>
    <property type="match status" value="1"/>
</dbReference>
<dbReference type="Pfam" id="PF11897">
    <property type="entry name" value="DUF3417"/>
    <property type="match status" value="1"/>
</dbReference>
<dbReference type="Pfam" id="PF00343">
    <property type="entry name" value="Phosphorylase"/>
    <property type="match status" value="1"/>
</dbReference>
<dbReference type="PIRSF" id="PIRSF000460">
    <property type="entry name" value="Pprylas_GlgP"/>
    <property type="match status" value="1"/>
</dbReference>
<dbReference type="SUPFAM" id="SSF53756">
    <property type="entry name" value="UDP-Glycosyltransferase/glycogen phosphorylase"/>
    <property type="match status" value="1"/>
</dbReference>
<dbReference type="PROSITE" id="PS00102">
    <property type="entry name" value="PHOSPHORYLASE"/>
    <property type="match status" value="1"/>
</dbReference>
<sequence>METVVNQIKSKLPENLEGLLDLAYNYWWSWNRRATKLWEKIDPEHWWEYKNPVKLLLDTPEERLKELSKDDDFINLYELVIDQFRHYMNPESTWFSTNYPKWEEPVIYLCMEYGISKSLPIYSGGLGILAGDHIKTASDLGIPLIAIGLLYKHGYFKQEIDKDGKQIEVFPEYNPEEMPIKPLTTEKGKPLLIEVPIEDRIVYARAFEVNVGRVKLYLLDTDVPQNSPDDRTICDYLYNAEIDKRIKQEILLGIGGMRLLRMLGIDPAVIHLNEGHPAFANFQRIAWYMEEGLNFLEALTVVRGTTIFTTHTPVPAGHDKFPIAEVEKRLAKFLEGLPKDEFLNLGREGDQFNMTLLSIRTSSYVNAVSKLHSKVTKEMWRHLWNGVPLDEIPVEGITNGVHTKTWLHNEIKKLVDRYIGRVWRDYAELEGLWYGVERIPDEELWEAHLKAKREFIELIKRKIKERNERLGIEEPLPEIDENALIIGFARRFATYKRATLILTDLERLKKIVNNPERPVYIIFGGKAHPRDEAGKEFLRKVYEVSQMPEFKNKIMVFENYDMGSARAMVAGVDVWLNNPRRPLEASGTSGMKAGLNGVLNLSVYDGWWVEGYNGKNGWVIGDESLEPETEKDNIRDAQSLYNLLENEVIPTYYENRARWIYMMKESIKSIAPRFSTHRMVKEYVDKFYSKALANAILLQRDSFKATREIASWKAKIFNSWDKVEIERIITHDATGVEVIVNLDGLSPEDVKVEIYYGVKAEGYAIEKPYVIELKHPQSLGGNRWLYRYEGNALKNLGHPCWHYAVRVYPYHDKLPHKFLLGLIKWKGFFEL</sequence>
<proteinExistence type="evidence at protein level"/>
<accession>Q9YGA7</accession>
<accession>H3ZK82</accession>
<name>PHSG_THELN</name>
<evidence type="ECO:0000250" key="1"/>
<evidence type="ECO:0000269" key="2">
    <source>
    </source>
</evidence>
<evidence type="ECO:0000305" key="3"/>
<feature type="chain" id="PRO_0000428945" description="Maltodextrin phosphorylase">
    <location>
        <begin position="1"/>
        <end position="831"/>
    </location>
</feature>
<feature type="modified residue" description="N6-(pyridoxal phosphate)lysine" evidence="1">
    <location>
        <position position="592"/>
    </location>
</feature>